<evidence type="ECO:0000250" key="1">
    <source>
        <dbReference type="UniProtKB" id="P68137"/>
    </source>
</evidence>
<evidence type="ECO:0000305" key="2"/>
<feature type="chain" id="PRO_0000088961" description="Actin, muscle">
    <location>
        <begin position="1" status="less than"/>
        <end position="172"/>
    </location>
</feature>
<feature type="non-terminal residue">
    <location>
        <position position="1"/>
    </location>
</feature>
<name>ACTM_LYTPI</name>
<sequence>AEREIVRNIKEKLCYVALDFEQEMATPAASSSLEKSYELPDGQVITIGNERFRCPETLFQPAFIGMESAGIHETTYNSIMKCDIDIRKDLYANTVLSGGTSMYPGIADRMQKEITALAPSSMKIKIIAPPERKYSVWIGGSILASLSTFQQMWISKQEYDESGPSIVHRKCF</sequence>
<comment type="function">
    <text>Actins are highly conserved proteins that are involved in various types of cell motility and are ubiquitously expressed in all eukaryotic cells.</text>
</comment>
<comment type="catalytic activity">
    <reaction evidence="1">
        <text>ATP + H2O = ADP + phosphate + H(+)</text>
        <dbReference type="Rhea" id="RHEA:13065"/>
        <dbReference type="ChEBI" id="CHEBI:15377"/>
        <dbReference type="ChEBI" id="CHEBI:15378"/>
        <dbReference type="ChEBI" id="CHEBI:30616"/>
        <dbReference type="ChEBI" id="CHEBI:43474"/>
        <dbReference type="ChEBI" id="CHEBI:456216"/>
    </reaction>
</comment>
<comment type="subcellular location">
    <subcellularLocation>
        <location>Cytoplasm</location>
        <location>Cytoskeleton</location>
    </subcellularLocation>
</comment>
<comment type="similarity">
    <text evidence="2">Belongs to the actin family.</text>
</comment>
<dbReference type="EC" id="3.6.4.-" evidence="1"/>
<dbReference type="EMBL" id="U09655">
    <property type="protein sequence ID" value="AAA53367.1"/>
    <property type="molecule type" value="Genomic_DNA"/>
</dbReference>
<dbReference type="SMR" id="Q25381"/>
<dbReference type="OrthoDB" id="9973372at2759"/>
<dbReference type="GO" id="GO:0005737">
    <property type="term" value="C:cytoplasm"/>
    <property type="evidence" value="ECO:0007669"/>
    <property type="project" value="UniProtKB-KW"/>
</dbReference>
<dbReference type="GO" id="GO:0005856">
    <property type="term" value="C:cytoskeleton"/>
    <property type="evidence" value="ECO:0007669"/>
    <property type="project" value="UniProtKB-SubCell"/>
</dbReference>
<dbReference type="GO" id="GO:0005524">
    <property type="term" value="F:ATP binding"/>
    <property type="evidence" value="ECO:0007669"/>
    <property type="project" value="UniProtKB-KW"/>
</dbReference>
<dbReference type="GO" id="GO:0016787">
    <property type="term" value="F:hydrolase activity"/>
    <property type="evidence" value="ECO:0007669"/>
    <property type="project" value="UniProtKB-KW"/>
</dbReference>
<dbReference type="FunFam" id="3.30.420.40:FF:000131">
    <property type="entry name" value="Actin, alpha skeletal muscle"/>
    <property type="match status" value="1"/>
</dbReference>
<dbReference type="FunFam" id="3.90.640.10:FF:000050">
    <property type="entry name" value="Actin, cytoskeletal 3"/>
    <property type="match status" value="1"/>
</dbReference>
<dbReference type="FunFam" id="3.30.420.40:FF:000058">
    <property type="entry name" value="Putative actin-related protein 5"/>
    <property type="match status" value="1"/>
</dbReference>
<dbReference type="Gene3D" id="3.30.420.40">
    <property type="match status" value="2"/>
</dbReference>
<dbReference type="Gene3D" id="3.90.640.10">
    <property type="entry name" value="Actin, Chain A, domain 4"/>
    <property type="match status" value="1"/>
</dbReference>
<dbReference type="InterPro" id="IPR004000">
    <property type="entry name" value="Actin"/>
</dbReference>
<dbReference type="InterPro" id="IPR004001">
    <property type="entry name" value="Actin_CS"/>
</dbReference>
<dbReference type="InterPro" id="IPR043129">
    <property type="entry name" value="ATPase_NBD"/>
</dbReference>
<dbReference type="PANTHER" id="PTHR11937">
    <property type="entry name" value="ACTIN"/>
    <property type="match status" value="1"/>
</dbReference>
<dbReference type="Pfam" id="PF00022">
    <property type="entry name" value="Actin"/>
    <property type="match status" value="1"/>
</dbReference>
<dbReference type="SMART" id="SM00268">
    <property type="entry name" value="ACTIN"/>
    <property type="match status" value="1"/>
</dbReference>
<dbReference type="SUPFAM" id="SSF53067">
    <property type="entry name" value="Actin-like ATPase domain"/>
    <property type="match status" value="1"/>
</dbReference>
<dbReference type="PROSITE" id="PS00432">
    <property type="entry name" value="ACTINS_2"/>
    <property type="match status" value="1"/>
</dbReference>
<protein>
    <recommendedName>
        <fullName>Actin, muscle</fullName>
        <ecNumber evidence="1">3.6.4.-</ecNumber>
    </recommendedName>
    <alternativeName>
        <fullName>LPM</fullName>
    </alternativeName>
</protein>
<proteinExistence type="inferred from homology"/>
<reference key="1">
    <citation type="journal article" date="1994" name="J. Mol. Evol.">
        <title>Evolution of actin gene families of sea urchins.</title>
        <authorList>
            <person name="Fang H."/>
            <person name="Brandhorst B.P."/>
        </authorList>
    </citation>
    <scope>NUCLEOTIDE SEQUENCE [GENOMIC DNA]</scope>
</reference>
<organism>
    <name type="scientific">Lytechinus pictus</name>
    <name type="common">Painted sea urchin</name>
    <dbReference type="NCBI Taxonomy" id="7653"/>
    <lineage>
        <taxon>Eukaryota</taxon>
        <taxon>Metazoa</taxon>
        <taxon>Echinodermata</taxon>
        <taxon>Eleutherozoa</taxon>
        <taxon>Echinozoa</taxon>
        <taxon>Echinoidea</taxon>
        <taxon>Euechinoidea</taxon>
        <taxon>Echinacea</taxon>
        <taxon>Temnopleuroida</taxon>
        <taxon>Toxopneustidae</taxon>
        <taxon>Lytechinus</taxon>
    </lineage>
</organism>
<accession>Q25381</accession>
<keyword id="KW-0067">ATP-binding</keyword>
<keyword id="KW-0963">Cytoplasm</keyword>
<keyword id="KW-0206">Cytoskeleton</keyword>
<keyword id="KW-0378">Hydrolase</keyword>
<keyword id="KW-0514">Muscle protein</keyword>
<keyword id="KW-0547">Nucleotide-binding</keyword>